<sequence>MSFAPNASHSPVFLLLGFSRANISYTLLFFLFLAIYLTTILGNVTLVLLISWDSRLHSPMYYLLRGLSVIDMGLSTVTLPQLLAHLVSHYPTIPAARCLAQFFFFYAFGVTDTLVIAVMALDRYVAICDPLHYALVMNHQRCACLLALSWVVSILHTMLRVGLVLPLCWTGDAGGNVNLPHFFCDHRPLLRASCSDIHSNELAIFFEGGFLMLGPCALIVLSYVRIGAAILRLPSAAGRRRAVSTCGSHLTMVGFLYGTIICVYFQPPFQNSQYQDMVASVMYTAITPLANPFVYSLHNKDVKGALCRLLEWVKVDP</sequence>
<name>OR1B1_HUMAN</name>
<organism>
    <name type="scientific">Homo sapiens</name>
    <name type="common">Human</name>
    <dbReference type="NCBI Taxonomy" id="9606"/>
    <lineage>
        <taxon>Eukaryota</taxon>
        <taxon>Metazoa</taxon>
        <taxon>Chordata</taxon>
        <taxon>Craniata</taxon>
        <taxon>Vertebrata</taxon>
        <taxon>Euteleostomi</taxon>
        <taxon>Mammalia</taxon>
        <taxon>Eutheria</taxon>
        <taxon>Euarchontoglires</taxon>
        <taxon>Primates</taxon>
        <taxon>Haplorrhini</taxon>
        <taxon>Catarrhini</taxon>
        <taxon>Hominidae</taxon>
        <taxon>Homo</taxon>
    </lineage>
</organism>
<comment type="function">
    <text evidence="3">Odorant receptor.</text>
</comment>
<comment type="subcellular location">
    <subcellularLocation>
        <location>Cell membrane</location>
        <topology>Multi-pass membrane protein</topology>
    </subcellularLocation>
</comment>
<comment type="polymorphism">
    <text>A stop codon at position Arg-192 in the gene coding for this protein is responsible for functional diversity thus producing a pseudogene. The stop codon is more frequent in non-Africans than in African-Americans.</text>
</comment>
<comment type="similarity">
    <text evidence="2">Belongs to the G-protein coupled receptor 1 family.</text>
</comment>
<comment type="sequence caution" evidence="3">
    <conflict type="erroneous initiation">
        <sequence resource="EMBL-CDS" id="DAA04627"/>
    </conflict>
    <text>Extended N-terminus.</text>
</comment>
<comment type="online information" name="Human Olfactory Receptor Data Exploratorium (HORDE)">
    <link uri="http://genome.weizmann.ac.il/horde/card/index/symbol:OR1B1"/>
</comment>
<feature type="chain" id="PRO_0000150416" description="Olfactory receptor 1B1">
    <location>
        <begin position="1"/>
        <end position="317"/>
    </location>
</feature>
<feature type="topological domain" description="Extracellular" evidence="1">
    <location>
        <begin position="1"/>
        <end position="29"/>
    </location>
</feature>
<feature type="transmembrane region" description="Helical; Name=1" evidence="1">
    <location>
        <begin position="30"/>
        <end position="50"/>
    </location>
</feature>
<feature type="topological domain" description="Cytoplasmic" evidence="1">
    <location>
        <begin position="51"/>
        <end position="66"/>
    </location>
</feature>
<feature type="transmembrane region" description="Helical; Name=2" evidence="1">
    <location>
        <begin position="67"/>
        <end position="87"/>
    </location>
</feature>
<feature type="topological domain" description="Extracellular" evidence="1">
    <location>
        <begin position="88"/>
        <end position="98"/>
    </location>
</feature>
<feature type="transmembrane region" description="Helical; Name=3" evidence="1">
    <location>
        <begin position="99"/>
        <end position="119"/>
    </location>
</feature>
<feature type="topological domain" description="Cytoplasmic" evidence="1">
    <location>
        <begin position="120"/>
        <end position="144"/>
    </location>
</feature>
<feature type="transmembrane region" description="Helical; Name=4" evidence="1">
    <location>
        <begin position="145"/>
        <end position="165"/>
    </location>
</feature>
<feature type="topological domain" description="Extracellular" evidence="1">
    <location>
        <begin position="166"/>
        <end position="201"/>
    </location>
</feature>
<feature type="transmembrane region" description="Helical; Name=5" evidence="1">
    <location>
        <begin position="202"/>
        <end position="222"/>
    </location>
</feature>
<feature type="topological domain" description="Cytoplasmic" evidence="1">
    <location>
        <begin position="223"/>
        <end position="248"/>
    </location>
</feature>
<feature type="transmembrane region" description="Helical; Name=6" evidence="1">
    <location>
        <begin position="249"/>
        <end position="269"/>
    </location>
</feature>
<feature type="topological domain" description="Extracellular" evidence="1">
    <location>
        <begin position="270"/>
        <end position="276"/>
    </location>
</feature>
<feature type="transmembrane region" description="Helical; Name=7" evidence="1">
    <location>
        <begin position="277"/>
        <end position="297"/>
    </location>
</feature>
<feature type="topological domain" description="Cytoplasmic" evidence="1">
    <location>
        <begin position="298"/>
        <end position="317"/>
    </location>
</feature>
<feature type="glycosylation site" description="N-linked (GlcNAc...) asparagine" evidence="1">
    <location>
        <position position="6"/>
    </location>
</feature>
<feature type="glycosylation site" description="N-linked (GlcNAc...) asparagine" evidence="1">
    <location>
        <position position="22"/>
    </location>
</feature>
<feature type="disulfide bond" evidence="2">
    <location>
        <begin position="98"/>
        <end position="184"/>
    </location>
</feature>
<feature type="sequence variant" id="VAR_053114" description="In dbSNP:rs1536929.">
    <original>L</original>
    <variation>S</variation>
    <location>
        <position position="148"/>
    </location>
</feature>
<feature type="sequence variant" id="VAR_053115" description="In dbSNP:rs1476859.">
    <original>A</original>
    <variation>T</variation>
    <location>
        <position position="229"/>
    </location>
</feature>
<feature type="sequence variant" id="VAR_053116" description="In dbSNP:rs1476858.">
    <original>C</original>
    <variation>W</variation>
    <location>
        <position position="262"/>
    </location>
</feature>
<feature type="sequence variant" id="VAR_053117" description="In dbSNP:rs1556189.">
    <original>V</original>
    <variation>G</variation>
    <location>
        <position position="313"/>
    </location>
</feature>
<reference key="1">
    <citation type="submission" date="2001-07" db="EMBL/GenBank/DDBJ databases">
        <title>Genome-wide discovery and analysis of human seven transmembrane helix receptor genes.</title>
        <authorList>
            <person name="Suwa M."/>
            <person name="Sato T."/>
            <person name="Okouchi I."/>
            <person name="Arita M."/>
            <person name="Futami K."/>
            <person name="Matsumoto S."/>
            <person name="Tsutsumi S."/>
            <person name="Aburatani H."/>
            <person name="Asai K."/>
            <person name="Akiyama Y."/>
        </authorList>
    </citation>
    <scope>NUCLEOTIDE SEQUENCE [GENOMIC DNA]</scope>
</reference>
<reference key="2">
    <citation type="journal article" date="2004" name="Nature">
        <title>DNA sequence and analysis of human chromosome 9.</title>
        <authorList>
            <person name="Humphray S.J."/>
            <person name="Oliver K."/>
            <person name="Hunt A.R."/>
            <person name="Plumb R.W."/>
            <person name="Loveland J.E."/>
            <person name="Howe K.L."/>
            <person name="Andrews T.D."/>
            <person name="Searle S."/>
            <person name="Hunt S.E."/>
            <person name="Scott C.E."/>
            <person name="Jones M.C."/>
            <person name="Ainscough R."/>
            <person name="Almeida J.P."/>
            <person name="Ambrose K.D."/>
            <person name="Ashwell R.I.S."/>
            <person name="Babbage A.K."/>
            <person name="Babbage S."/>
            <person name="Bagguley C.L."/>
            <person name="Bailey J."/>
            <person name="Banerjee R."/>
            <person name="Barker D.J."/>
            <person name="Barlow K.F."/>
            <person name="Bates K."/>
            <person name="Beasley H."/>
            <person name="Beasley O."/>
            <person name="Bird C.P."/>
            <person name="Bray-Allen S."/>
            <person name="Brown A.J."/>
            <person name="Brown J.Y."/>
            <person name="Burford D."/>
            <person name="Burrill W."/>
            <person name="Burton J."/>
            <person name="Carder C."/>
            <person name="Carter N.P."/>
            <person name="Chapman J.C."/>
            <person name="Chen Y."/>
            <person name="Clarke G."/>
            <person name="Clark S.Y."/>
            <person name="Clee C.M."/>
            <person name="Clegg S."/>
            <person name="Collier R.E."/>
            <person name="Corby N."/>
            <person name="Crosier M."/>
            <person name="Cummings A.T."/>
            <person name="Davies J."/>
            <person name="Dhami P."/>
            <person name="Dunn M."/>
            <person name="Dutta I."/>
            <person name="Dyer L.W."/>
            <person name="Earthrowl M.E."/>
            <person name="Faulkner L."/>
            <person name="Fleming C.J."/>
            <person name="Frankish A."/>
            <person name="Frankland J.A."/>
            <person name="French L."/>
            <person name="Fricker D.G."/>
            <person name="Garner P."/>
            <person name="Garnett J."/>
            <person name="Ghori J."/>
            <person name="Gilbert J.G.R."/>
            <person name="Glison C."/>
            <person name="Grafham D.V."/>
            <person name="Gribble S."/>
            <person name="Griffiths C."/>
            <person name="Griffiths-Jones S."/>
            <person name="Grocock R."/>
            <person name="Guy J."/>
            <person name="Hall R.E."/>
            <person name="Hammond S."/>
            <person name="Harley J.L."/>
            <person name="Harrison E.S.I."/>
            <person name="Hart E.A."/>
            <person name="Heath P.D."/>
            <person name="Henderson C.D."/>
            <person name="Hopkins B.L."/>
            <person name="Howard P.J."/>
            <person name="Howden P.J."/>
            <person name="Huckle E."/>
            <person name="Johnson C."/>
            <person name="Johnson D."/>
            <person name="Joy A.A."/>
            <person name="Kay M."/>
            <person name="Keenan S."/>
            <person name="Kershaw J.K."/>
            <person name="Kimberley A.M."/>
            <person name="King A."/>
            <person name="Knights A."/>
            <person name="Laird G.K."/>
            <person name="Langford C."/>
            <person name="Lawlor S."/>
            <person name="Leongamornlert D.A."/>
            <person name="Leversha M."/>
            <person name="Lloyd C."/>
            <person name="Lloyd D.M."/>
            <person name="Lovell J."/>
            <person name="Martin S."/>
            <person name="Mashreghi-Mohammadi M."/>
            <person name="Matthews L."/>
            <person name="McLaren S."/>
            <person name="McLay K.E."/>
            <person name="McMurray A."/>
            <person name="Milne S."/>
            <person name="Nickerson T."/>
            <person name="Nisbett J."/>
            <person name="Nordsiek G."/>
            <person name="Pearce A.V."/>
            <person name="Peck A.I."/>
            <person name="Porter K.M."/>
            <person name="Pandian R."/>
            <person name="Pelan S."/>
            <person name="Phillimore B."/>
            <person name="Povey S."/>
            <person name="Ramsey Y."/>
            <person name="Rand V."/>
            <person name="Scharfe M."/>
            <person name="Sehra H.K."/>
            <person name="Shownkeen R."/>
            <person name="Sims S.K."/>
            <person name="Skuce C.D."/>
            <person name="Smith M."/>
            <person name="Steward C.A."/>
            <person name="Swarbreck D."/>
            <person name="Sycamore N."/>
            <person name="Tester J."/>
            <person name="Thorpe A."/>
            <person name="Tracey A."/>
            <person name="Tromans A."/>
            <person name="Thomas D.W."/>
            <person name="Wall M."/>
            <person name="Wallis J.M."/>
            <person name="West A.P."/>
            <person name="Whitehead S.L."/>
            <person name="Willey D.L."/>
            <person name="Williams S.A."/>
            <person name="Wilming L."/>
            <person name="Wray P.W."/>
            <person name="Young L."/>
            <person name="Ashurst J.L."/>
            <person name="Coulson A."/>
            <person name="Blocker H."/>
            <person name="Durbin R.M."/>
            <person name="Sulston J.E."/>
            <person name="Hubbard T."/>
            <person name="Jackson M.J."/>
            <person name="Bentley D.R."/>
            <person name="Beck S."/>
            <person name="Rogers J."/>
            <person name="Dunham I."/>
        </authorList>
    </citation>
    <scope>NUCLEOTIDE SEQUENCE [LARGE SCALE GENOMIC DNA]</scope>
</reference>
<reference key="3">
    <citation type="journal article" date="2004" name="Proc. Natl. Acad. Sci. U.S.A.">
        <title>The human olfactory receptor gene family.</title>
        <authorList>
            <person name="Malnic B."/>
            <person name="Godfrey P.A."/>
            <person name="Buck L.B."/>
        </authorList>
    </citation>
    <scope>IDENTIFICATION</scope>
</reference>
<reference key="4">
    <citation type="journal article" date="2004" name="Proc. Natl. Acad. Sci. U.S.A.">
        <authorList>
            <person name="Malnic B."/>
            <person name="Godfrey P.A."/>
            <person name="Buck L.B."/>
        </authorList>
    </citation>
    <scope>ERRATUM OF PUBMED:14983052</scope>
</reference>
<reference key="5">
    <citation type="journal article" date="2003" name="Nat. Genet.">
        <title>Different noses for different people.</title>
        <authorList>
            <person name="Menashe I."/>
            <person name="Man O."/>
            <person name="Lancet D."/>
            <person name="Gilad Y."/>
        </authorList>
    </citation>
    <scope>POLYMORPHISM</scope>
</reference>
<dbReference type="EMBL" id="AB065723">
    <property type="protein sequence ID" value="BAC05944.1"/>
    <property type="molecule type" value="Genomic_DNA"/>
</dbReference>
<dbReference type="EMBL" id="AL162254">
    <property type="status" value="NOT_ANNOTATED_CDS"/>
    <property type="molecule type" value="Genomic_DNA"/>
</dbReference>
<dbReference type="EMBL" id="BK004229">
    <property type="protein sequence ID" value="DAA04627.1"/>
    <property type="status" value="ALT_INIT"/>
    <property type="molecule type" value="Genomic_DNA"/>
</dbReference>
<dbReference type="RefSeq" id="NP_001004450.2">
    <property type="nucleotide sequence ID" value="NM_001004450.3"/>
</dbReference>
<dbReference type="RefSeq" id="NP_001396622.1">
    <property type="nucleotide sequence ID" value="NM_001409693.1"/>
</dbReference>
<dbReference type="SMR" id="Q8NGR6"/>
<dbReference type="FunCoup" id="Q8NGR6">
    <property type="interactions" value="431"/>
</dbReference>
<dbReference type="STRING" id="9606.ENSP00000485577"/>
<dbReference type="GlyCosmos" id="Q8NGR6">
    <property type="glycosylation" value="2 sites, No reported glycans"/>
</dbReference>
<dbReference type="GlyGen" id="Q8NGR6">
    <property type="glycosylation" value="2 sites"/>
</dbReference>
<dbReference type="PhosphoSitePlus" id="Q8NGR6"/>
<dbReference type="BioMuta" id="OR1B1"/>
<dbReference type="DMDM" id="166214963"/>
<dbReference type="jPOST" id="Q8NGR6"/>
<dbReference type="MassIVE" id="Q8NGR6"/>
<dbReference type="PaxDb" id="9606-ENSP00000303151"/>
<dbReference type="PeptideAtlas" id="Q8NGR6"/>
<dbReference type="Antibodypedia" id="78801">
    <property type="antibodies" value="51 antibodies from 16 providers"/>
</dbReference>
<dbReference type="DNASU" id="347169"/>
<dbReference type="Ensembl" id="ENST00000623530.2">
    <property type="protein sequence ID" value="ENSP00000485577.2"/>
    <property type="gene ID" value="ENSG00000280094.3"/>
</dbReference>
<dbReference type="Ensembl" id="ENST00000707075.1">
    <property type="protein sequence ID" value="ENSP00000516726.1"/>
    <property type="gene ID" value="ENSG00000280094.3"/>
</dbReference>
<dbReference type="GeneID" id="347169"/>
<dbReference type="KEGG" id="hsa:347169"/>
<dbReference type="MANE-Select" id="ENST00000623530.2">
    <property type="protein sequence ID" value="ENSP00000485577.2"/>
    <property type="RefSeq nucleotide sequence ID" value="NM_001004450.3"/>
    <property type="RefSeq protein sequence ID" value="NP_001004450.2"/>
</dbReference>
<dbReference type="UCSC" id="uc011lyz.2">
    <property type="organism name" value="human"/>
</dbReference>
<dbReference type="AGR" id="HGNC:8181"/>
<dbReference type="CTD" id="347169"/>
<dbReference type="DisGeNET" id="347169"/>
<dbReference type="GeneCards" id="OR1B1"/>
<dbReference type="HGNC" id="HGNC:8181">
    <property type="gene designation" value="OR1B1"/>
</dbReference>
<dbReference type="HPA" id="ENSG00000280094">
    <property type="expression patterns" value="Not detected"/>
</dbReference>
<dbReference type="neXtProt" id="NX_Q8NGR6"/>
<dbReference type="PharmGKB" id="PA32055"/>
<dbReference type="VEuPathDB" id="HostDB:ENSG00000280094"/>
<dbReference type="eggNOG" id="ENOG502QWKX">
    <property type="taxonomic scope" value="Eukaryota"/>
</dbReference>
<dbReference type="GeneTree" id="ENSGT00900000141254"/>
<dbReference type="HOGENOM" id="CLU_012526_0_1_1"/>
<dbReference type="InParanoid" id="Q8NGR6"/>
<dbReference type="OMA" id="ELAIFFE"/>
<dbReference type="OrthoDB" id="5962705at2759"/>
<dbReference type="PAN-GO" id="Q8NGR6">
    <property type="GO annotations" value="3 GO annotations based on evolutionary models"/>
</dbReference>
<dbReference type="PhylomeDB" id="Q8NGR6"/>
<dbReference type="TreeFam" id="TF337210"/>
<dbReference type="PathwayCommons" id="Q8NGR6"/>
<dbReference type="Reactome" id="R-HSA-9752946">
    <property type="pathway name" value="Expression and translocation of olfactory receptors"/>
</dbReference>
<dbReference type="BioGRID-ORCS" id="347169">
    <property type="hits" value="9 hits in 738 CRISPR screens"/>
</dbReference>
<dbReference type="GeneWiki" id="OR1B1"/>
<dbReference type="GenomeRNAi" id="347169"/>
<dbReference type="Pharos" id="Q8NGR6">
    <property type="development level" value="Tdark"/>
</dbReference>
<dbReference type="PRO" id="PR:Q8NGR6"/>
<dbReference type="Proteomes" id="UP000005640">
    <property type="component" value="Chromosome 9"/>
</dbReference>
<dbReference type="RNAct" id="Q8NGR6">
    <property type="molecule type" value="protein"/>
</dbReference>
<dbReference type="Bgee" id="ENSG00000280094">
    <property type="expression patterns" value="Expressed in cortical plate and 8 other cell types or tissues"/>
</dbReference>
<dbReference type="GO" id="GO:0005886">
    <property type="term" value="C:plasma membrane"/>
    <property type="evidence" value="ECO:0000318"/>
    <property type="project" value="GO_Central"/>
</dbReference>
<dbReference type="GO" id="GO:0004930">
    <property type="term" value="F:G protein-coupled receptor activity"/>
    <property type="evidence" value="ECO:0007669"/>
    <property type="project" value="UniProtKB-KW"/>
</dbReference>
<dbReference type="GO" id="GO:0004984">
    <property type="term" value="F:olfactory receptor activity"/>
    <property type="evidence" value="ECO:0000318"/>
    <property type="project" value="GO_Central"/>
</dbReference>
<dbReference type="GO" id="GO:0007165">
    <property type="term" value="P:signal transduction"/>
    <property type="evidence" value="ECO:0000318"/>
    <property type="project" value="GO_Central"/>
</dbReference>
<dbReference type="CDD" id="cd15235">
    <property type="entry name" value="7tmA_OR1A-like"/>
    <property type="match status" value="1"/>
</dbReference>
<dbReference type="FunFam" id="1.20.1070.10:FF:000015">
    <property type="entry name" value="Olfactory receptor"/>
    <property type="match status" value="1"/>
</dbReference>
<dbReference type="Gene3D" id="1.20.1070.10">
    <property type="entry name" value="Rhodopsin 7-helix transmembrane proteins"/>
    <property type="match status" value="1"/>
</dbReference>
<dbReference type="InterPro" id="IPR000276">
    <property type="entry name" value="GPCR_Rhodpsn"/>
</dbReference>
<dbReference type="InterPro" id="IPR017452">
    <property type="entry name" value="GPCR_Rhodpsn_7TM"/>
</dbReference>
<dbReference type="InterPro" id="IPR000725">
    <property type="entry name" value="Olfact_rcpt"/>
</dbReference>
<dbReference type="PANTHER" id="PTHR48001">
    <property type="entry name" value="OLFACTORY RECEPTOR"/>
    <property type="match status" value="1"/>
</dbReference>
<dbReference type="Pfam" id="PF13853">
    <property type="entry name" value="7tm_4"/>
    <property type="match status" value="1"/>
</dbReference>
<dbReference type="PRINTS" id="PR00237">
    <property type="entry name" value="GPCRRHODOPSN"/>
</dbReference>
<dbReference type="PRINTS" id="PR00245">
    <property type="entry name" value="OLFACTORYR"/>
</dbReference>
<dbReference type="SUPFAM" id="SSF81321">
    <property type="entry name" value="Family A G protein-coupled receptor-like"/>
    <property type="match status" value="1"/>
</dbReference>
<dbReference type="PROSITE" id="PS00237">
    <property type="entry name" value="G_PROTEIN_RECEP_F1_1"/>
    <property type="match status" value="1"/>
</dbReference>
<dbReference type="PROSITE" id="PS50262">
    <property type="entry name" value="G_PROTEIN_RECEP_F1_2"/>
    <property type="match status" value="1"/>
</dbReference>
<accession>Q8NGR6</accession>
<accession>Q6IFN3</accession>
<proteinExistence type="inferred from homology"/>
<evidence type="ECO:0000255" key="1"/>
<evidence type="ECO:0000255" key="2">
    <source>
        <dbReference type="PROSITE-ProRule" id="PRU00521"/>
    </source>
</evidence>
<evidence type="ECO:0000305" key="3"/>
<keyword id="KW-1003">Cell membrane</keyword>
<keyword id="KW-1015">Disulfide bond</keyword>
<keyword id="KW-0297">G-protein coupled receptor</keyword>
<keyword id="KW-0325">Glycoprotein</keyword>
<keyword id="KW-0472">Membrane</keyword>
<keyword id="KW-0552">Olfaction</keyword>
<keyword id="KW-0675">Receptor</keyword>
<keyword id="KW-1185">Reference proteome</keyword>
<keyword id="KW-0716">Sensory transduction</keyword>
<keyword id="KW-0807">Transducer</keyword>
<keyword id="KW-0812">Transmembrane</keyword>
<keyword id="KW-1133">Transmembrane helix</keyword>
<gene>
    <name type="primary">OR1B1</name>
</gene>
<protein>
    <recommendedName>
        <fullName>Olfactory receptor 1B1</fullName>
    </recommendedName>
    <alternativeName>
        <fullName>Olfactory receptor 9-B</fullName>
        <shortName>OR9-B</shortName>
    </alternativeName>
    <alternativeName>
        <fullName>Olfactory receptor OR9-26</fullName>
    </alternativeName>
</protein>